<name>LEPA_PROMH</name>
<accession>B4F049</accession>
<gene>
    <name evidence="1" type="primary">lepA</name>
    <name type="ordered locus">PMI1890</name>
</gene>
<protein>
    <recommendedName>
        <fullName evidence="1">Elongation factor 4</fullName>
        <shortName evidence="1">EF-4</shortName>
        <ecNumber evidence="1">3.6.5.n1</ecNumber>
    </recommendedName>
    <alternativeName>
        <fullName evidence="1">Ribosomal back-translocase LepA</fullName>
    </alternativeName>
</protein>
<comment type="function">
    <text evidence="1">Required for accurate and efficient protein synthesis under certain stress conditions. May act as a fidelity factor of the translation reaction, by catalyzing a one-codon backward translocation of tRNAs on improperly translocated ribosomes. Back-translocation proceeds from a post-translocation (POST) complex to a pre-translocation (PRE) complex, thus giving elongation factor G a second chance to translocate the tRNAs correctly. Binds to ribosomes in a GTP-dependent manner.</text>
</comment>
<comment type="catalytic activity">
    <reaction evidence="1">
        <text>GTP + H2O = GDP + phosphate + H(+)</text>
        <dbReference type="Rhea" id="RHEA:19669"/>
        <dbReference type="ChEBI" id="CHEBI:15377"/>
        <dbReference type="ChEBI" id="CHEBI:15378"/>
        <dbReference type="ChEBI" id="CHEBI:37565"/>
        <dbReference type="ChEBI" id="CHEBI:43474"/>
        <dbReference type="ChEBI" id="CHEBI:58189"/>
        <dbReference type="EC" id="3.6.5.n1"/>
    </reaction>
</comment>
<comment type="subcellular location">
    <subcellularLocation>
        <location evidence="1">Cell inner membrane</location>
        <topology evidence="1">Peripheral membrane protein</topology>
        <orientation evidence="1">Cytoplasmic side</orientation>
    </subcellularLocation>
</comment>
<comment type="similarity">
    <text evidence="1">Belongs to the TRAFAC class translation factor GTPase superfamily. Classic translation factor GTPase family. LepA subfamily.</text>
</comment>
<organism>
    <name type="scientific">Proteus mirabilis (strain HI4320)</name>
    <dbReference type="NCBI Taxonomy" id="529507"/>
    <lineage>
        <taxon>Bacteria</taxon>
        <taxon>Pseudomonadati</taxon>
        <taxon>Pseudomonadota</taxon>
        <taxon>Gammaproteobacteria</taxon>
        <taxon>Enterobacterales</taxon>
        <taxon>Morganellaceae</taxon>
        <taxon>Proteus</taxon>
    </lineage>
</organism>
<reference key="1">
    <citation type="journal article" date="2008" name="J. Bacteriol.">
        <title>Complete genome sequence of uropathogenic Proteus mirabilis, a master of both adherence and motility.</title>
        <authorList>
            <person name="Pearson M.M."/>
            <person name="Sebaihia M."/>
            <person name="Churcher C."/>
            <person name="Quail M.A."/>
            <person name="Seshasayee A.S."/>
            <person name="Luscombe N.M."/>
            <person name="Abdellah Z."/>
            <person name="Arrosmith C."/>
            <person name="Atkin B."/>
            <person name="Chillingworth T."/>
            <person name="Hauser H."/>
            <person name="Jagels K."/>
            <person name="Moule S."/>
            <person name="Mungall K."/>
            <person name="Norbertczak H."/>
            <person name="Rabbinowitsch E."/>
            <person name="Walker D."/>
            <person name="Whithead S."/>
            <person name="Thomson N.R."/>
            <person name="Rather P.N."/>
            <person name="Parkhill J."/>
            <person name="Mobley H.L.T."/>
        </authorList>
    </citation>
    <scope>NUCLEOTIDE SEQUENCE [LARGE SCALE GENOMIC DNA]</scope>
    <source>
        <strain>HI4320</strain>
    </source>
</reference>
<evidence type="ECO:0000255" key="1">
    <source>
        <dbReference type="HAMAP-Rule" id="MF_00071"/>
    </source>
</evidence>
<dbReference type="EC" id="3.6.5.n1" evidence="1"/>
<dbReference type="EMBL" id="AM942759">
    <property type="protein sequence ID" value="CAR43916.1"/>
    <property type="molecule type" value="Genomic_DNA"/>
</dbReference>
<dbReference type="RefSeq" id="WP_004243894.1">
    <property type="nucleotide sequence ID" value="NC_010554.1"/>
</dbReference>
<dbReference type="SMR" id="B4F049"/>
<dbReference type="EnsemblBacteria" id="CAR43916">
    <property type="protein sequence ID" value="CAR43916"/>
    <property type="gene ID" value="PMI1890"/>
</dbReference>
<dbReference type="GeneID" id="6800022"/>
<dbReference type="KEGG" id="pmr:PMI1890"/>
<dbReference type="eggNOG" id="COG0481">
    <property type="taxonomic scope" value="Bacteria"/>
</dbReference>
<dbReference type="HOGENOM" id="CLU_009995_3_3_6"/>
<dbReference type="Proteomes" id="UP000008319">
    <property type="component" value="Chromosome"/>
</dbReference>
<dbReference type="GO" id="GO:0005886">
    <property type="term" value="C:plasma membrane"/>
    <property type="evidence" value="ECO:0007669"/>
    <property type="project" value="UniProtKB-SubCell"/>
</dbReference>
<dbReference type="GO" id="GO:0005525">
    <property type="term" value="F:GTP binding"/>
    <property type="evidence" value="ECO:0007669"/>
    <property type="project" value="UniProtKB-UniRule"/>
</dbReference>
<dbReference type="GO" id="GO:0003924">
    <property type="term" value="F:GTPase activity"/>
    <property type="evidence" value="ECO:0007669"/>
    <property type="project" value="UniProtKB-UniRule"/>
</dbReference>
<dbReference type="GO" id="GO:0097216">
    <property type="term" value="F:guanosine tetraphosphate binding"/>
    <property type="evidence" value="ECO:0007669"/>
    <property type="project" value="UniProtKB-ARBA"/>
</dbReference>
<dbReference type="GO" id="GO:0043022">
    <property type="term" value="F:ribosome binding"/>
    <property type="evidence" value="ECO:0007669"/>
    <property type="project" value="UniProtKB-UniRule"/>
</dbReference>
<dbReference type="GO" id="GO:0003746">
    <property type="term" value="F:translation elongation factor activity"/>
    <property type="evidence" value="ECO:0007669"/>
    <property type="project" value="UniProtKB-UniRule"/>
</dbReference>
<dbReference type="GO" id="GO:0045727">
    <property type="term" value="P:positive regulation of translation"/>
    <property type="evidence" value="ECO:0007669"/>
    <property type="project" value="UniProtKB-UniRule"/>
</dbReference>
<dbReference type="CDD" id="cd03699">
    <property type="entry name" value="EF4_II"/>
    <property type="match status" value="1"/>
</dbReference>
<dbReference type="CDD" id="cd16260">
    <property type="entry name" value="EF4_III"/>
    <property type="match status" value="1"/>
</dbReference>
<dbReference type="CDD" id="cd01890">
    <property type="entry name" value="LepA"/>
    <property type="match status" value="1"/>
</dbReference>
<dbReference type="CDD" id="cd03709">
    <property type="entry name" value="lepA_C"/>
    <property type="match status" value="1"/>
</dbReference>
<dbReference type="FunFam" id="3.30.70.240:FF:000005">
    <property type="entry name" value="Elongation factor 4"/>
    <property type="match status" value="1"/>
</dbReference>
<dbReference type="FunFam" id="3.40.50.300:FF:000078">
    <property type="entry name" value="Elongation factor 4"/>
    <property type="match status" value="1"/>
</dbReference>
<dbReference type="FunFam" id="2.40.30.10:FF:000015">
    <property type="entry name" value="Translation factor GUF1, mitochondrial"/>
    <property type="match status" value="1"/>
</dbReference>
<dbReference type="FunFam" id="3.30.70.2570:FF:000001">
    <property type="entry name" value="Translation factor GUF1, mitochondrial"/>
    <property type="match status" value="1"/>
</dbReference>
<dbReference type="FunFam" id="3.30.70.870:FF:000004">
    <property type="entry name" value="Translation factor GUF1, mitochondrial"/>
    <property type="match status" value="1"/>
</dbReference>
<dbReference type="Gene3D" id="3.30.70.240">
    <property type="match status" value="1"/>
</dbReference>
<dbReference type="Gene3D" id="3.30.70.2570">
    <property type="entry name" value="Elongation factor 4, C-terminal domain"/>
    <property type="match status" value="1"/>
</dbReference>
<dbReference type="Gene3D" id="3.30.70.870">
    <property type="entry name" value="Elongation Factor G (Translational Gtpase), domain 3"/>
    <property type="match status" value="1"/>
</dbReference>
<dbReference type="Gene3D" id="3.40.50.300">
    <property type="entry name" value="P-loop containing nucleotide triphosphate hydrolases"/>
    <property type="match status" value="1"/>
</dbReference>
<dbReference type="Gene3D" id="2.40.30.10">
    <property type="entry name" value="Translation factors"/>
    <property type="match status" value="1"/>
</dbReference>
<dbReference type="HAMAP" id="MF_00071">
    <property type="entry name" value="LepA"/>
    <property type="match status" value="1"/>
</dbReference>
<dbReference type="InterPro" id="IPR006297">
    <property type="entry name" value="EF-4"/>
</dbReference>
<dbReference type="InterPro" id="IPR035647">
    <property type="entry name" value="EFG_III/V"/>
</dbReference>
<dbReference type="InterPro" id="IPR000640">
    <property type="entry name" value="EFG_V-like"/>
</dbReference>
<dbReference type="InterPro" id="IPR004161">
    <property type="entry name" value="EFTu-like_2"/>
</dbReference>
<dbReference type="InterPro" id="IPR031157">
    <property type="entry name" value="G_TR_CS"/>
</dbReference>
<dbReference type="InterPro" id="IPR038363">
    <property type="entry name" value="LepA_C_sf"/>
</dbReference>
<dbReference type="InterPro" id="IPR013842">
    <property type="entry name" value="LepA_CTD"/>
</dbReference>
<dbReference type="InterPro" id="IPR035654">
    <property type="entry name" value="LepA_IV"/>
</dbReference>
<dbReference type="InterPro" id="IPR027417">
    <property type="entry name" value="P-loop_NTPase"/>
</dbReference>
<dbReference type="InterPro" id="IPR005225">
    <property type="entry name" value="Small_GTP-bd"/>
</dbReference>
<dbReference type="InterPro" id="IPR000795">
    <property type="entry name" value="T_Tr_GTP-bd_dom"/>
</dbReference>
<dbReference type="NCBIfam" id="TIGR01393">
    <property type="entry name" value="lepA"/>
    <property type="match status" value="1"/>
</dbReference>
<dbReference type="NCBIfam" id="TIGR00231">
    <property type="entry name" value="small_GTP"/>
    <property type="match status" value="1"/>
</dbReference>
<dbReference type="PANTHER" id="PTHR43512:SF4">
    <property type="entry name" value="TRANSLATION FACTOR GUF1 HOMOLOG, CHLOROPLASTIC"/>
    <property type="match status" value="1"/>
</dbReference>
<dbReference type="PANTHER" id="PTHR43512">
    <property type="entry name" value="TRANSLATION FACTOR GUF1-RELATED"/>
    <property type="match status" value="1"/>
</dbReference>
<dbReference type="Pfam" id="PF00679">
    <property type="entry name" value="EFG_C"/>
    <property type="match status" value="1"/>
</dbReference>
<dbReference type="Pfam" id="PF00009">
    <property type="entry name" value="GTP_EFTU"/>
    <property type="match status" value="1"/>
</dbReference>
<dbReference type="Pfam" id="PF03144">
    <property type="entry name" value="GTP_EFTU_D2"/>
    <property type="match status" value="1"/>
</dbReference>
<dbReference type="Pfam" id="PF06421">
    <property type="entry name" value="LepA_C"/>
    <property type="match status" value="1"/>
</dbReference>
<dbReference type="PRINTS" id="PR00315">
    <property type="entry name" value="ELONGATNFCT"/>
</dbReference>
<dbReference type="SUPFAM" id="SSF54980">
    <property type="entry name" value="EF-G C-terminal domain-like"/>
    <property type="match status" value="2"/>
</dbReference>
<dbReference type="SUPFAM" id="SSF52540">
    <property type="entry name" value="P-loop containing nucleoside triphosphate hydrolases"/>
    <property type="match status" value="1"/>
</dbReference>
<dbReference type="PROSITE" id="PS00301">
    <property type="entry name" value="G_TR_1"/>
    <property type="match status" value="1"/>
</dbReference>
<dbReference type="PROSITE" id="PS51722">
    <property type="entry name" value="G_TR_2"/>
    <property type="match status" value="1"/>
</dbReference>
<feature type="chain" id="PRO_1000092428" description="Elongation factor 4">
    <location>
        <begin position="1"/>
        <end position="598"/>
    </location>
</feature>
<feature type="domain" description="tr-type G">
    <location>
        <begin position="2"/>
        <end position="184"/>
    </location>
</feature>
<feature type="binding site" evidence="1">
    <location>
        <begin position="14"/>
        <end position="19"/>
    </location>
    <ligand>
        <name>GTP</name>
        <dbReference type="ChEBI" id="CHEBI:37565"/>
    </ligand>
</feature>
<feature type="binding site" evidence="1">
    <location>
        <begin position="131"/>
        <end position="134"/>
    </location>
    <ligand>
        <name>GTP</name>
        <dbReference type="ChEBI" id="CHEBI:37565"/>
    </ligand>
</feature>
<sequence>MKNIRNFSIIAHIDHGKSTLSDRIIQICGGLTDREMAAQVLDSMDLERERGITIKAQSVTLNYTADDGEVYQLNFIDTPGHVDFSYEVSRSLAACEGALLVVDAGQGVEAQTLANCYTAIDMDLTVVPVLNKIDLPAAEPERVAEEIEDIVGIDATDAVRCSAKTGVGVKEVIERLVKEIPAPEGDPDAPLQALIIDSWFDNYLGVVSLIRIKNGKVNKGDKIKVMSTGQVYNIDRIGIFTPKQVDTTSLSCGEVGWVVCGIKDILGAPVGDTLTAAQKPADKPLPGFKKVKPQVYAGLFPVSSDDYESFRDALGKLSLNDASLFYEPESSSALGFGFRCGFLGLLHMEIIQERLEREYDLDLITTAPTVVYEVEMTNGDIIMVDSPSKLPALNNIEEIREPIAECHMLLPQEYLGNVITLCVEKRGVQTNMVYHGNQVSLTYEIPMAEVVLDFFDRLKSTSRGYASLDYNFLRFQGSNMVRVDVLINGERVDALALITHNDNAPYRGRELVEKMKEFIPRQQFDIAIQAAIGNHIIARSTVKQLRKNVLAKCYGGDVSRKKKLLQKQKEGKKRMKQIGNVELPQEAFLAILHVGKDK</sequence>
<keyword id="KW-0997">Cell inner membrane</keyword>
<keyword id="KW-1003">Cell membrane</keyword>
<keyword id="KW-0342">GTP-binding</keyword>
<keyword id="KW-0378">Hydrolase</keyword>
<keyword id="KW-0472">Membrane</keyword>
<keyword id="KW-0547">Nucleotide-binding</keyword>
<keyword id="KW-0648">Protein biosynthesis</keyword>
<keyword id="KW-1185">Reference proteome</keyword>
<proteinExistence type="inferred from homology"/>